<accession>A1SRH8</accession>
<dbReference type="EC" id="4.1.1.31" evidence="1"/>
<dbReference type="EMBL" id="CP000510">
    <property type="protein sequence ID" value="ABM02093.1"/>
    <property type="molecule type" value="Genomic_DNA"/>
</dbReference>
<dbReference type="RefSeq" id="WP_011768652.1">
    <property type="nucleotide sequence ID" value="NC_008709.1"/>
</dbReference>
<dbReference type="SMR" id="A1SRH8"/>
<dbReference type="STRING" id="357804.Ping_0226"/>
<dbReference type="KEGG" id="pin:Ping_0226"/>
<dbReference type="eggNOG" id="COG2352">
    <property type="taxonomic scope" value="Bacteria"/>
</dbReference>
<dbReference type="HOGENOM" id="CLU_006557_2_0_6"/>
<dbReference type="OrthoDB" id="9768133at2"/>
<dbReference type="Proteomes" id="UP000000639">
    <property type="component" value="Chromosome"/>
</dbReference>
<dbReference type="GO" id="GO:0005829">
    <property type="term" value="C:cytosol"/>
    <property type="evidence" value="ECO:0007669"/>
    <property type="project" value="TreeGrafter"/>
</dbReference>
<dbReference type="GO" id="GO:0000287">
    <property type="term" value="F:magnesium ion binding"/>
    <property type="evidence" value="ECO:0007669"/>
    <property type="project" value="UniProtKB-UniRule"/>
</dbReference>
<dbReference type="GO" id="GO:0008964">
    <property type="term" value="F:phosphoenolpyruvate carboxylase activity"/>
    <property type="evidence" value="ECO:0007669"/>
    <property type="project" value="UniProtKB-UniRule"/>
</dbReference>
<dbReference type="GO" id="GO:0015977">
    <property type="term" value="P:carbon fixation"/>
    <property type="evidence" value="ECO:0007669"/>
    <property type="project" value="UniProtKB-UniRule"/>
</dbReference>
<dbReference type="GO" id="GO:0006107">
    <property type="term" value="P:oxaloacetate metabolic process"/>
    <property type="evidence" value="ECO:0007669"/>
    <property type="project" value="UniProtKB-UniRule"/>
</dbReference>
<dbReference type="GO" id="GO:0006099">
    <property type="term" value="P:tricarboxylic acid cycle"/>
    <property type="evidence" value="ECO:0007669"/>
    <property type="project" value="InterPro"/>
</dbReference>
<dbReference type="Gene3D" id="1.20.1440.90">
    <property type="entry name" value="Phosphoenolpyruvate/pyruvate domain"/>
    <property type="match status" value="1"/>
</dbReference>
<dbReference type="HAMAP" id="MF_00595">
    <property type="entry name" value="PEPcase_type1"/>
    <property type="match status" value="1"/>
</dbReference>
<dbReference type="InterPro" id="IPR021135">
    <property type="entry name" value="PEP_COase"/>
</dbReference>
<dbReference type="InterPro" id="IPR022805">
    <property type="entry name" value="PEP_COase_bac/pln-type"/>
</dbReference>
<dbReference type="InterPro" id="IPR018129">
    <property type="entry name" value="PEP_COase_Lys_AS"/>
</dbReference>
<dbReference type="InterPro" id="IPR033129">
    <property type="entry name" value="PEPCASE_His_AS"/>
</dbReference>
<dbReference type="InterPro" id="IPR015813">
    <property type="entry name" value="Pyrv/PenolPyrv_kinase-like_dom"/>
</dbReference>
<dbReference type="NCBIfam" id="NF000584">
    <property type="entry name" value="PRK00009.1"/>
    <property type="match status" value="1"/>
</dbReference>
<dbReference type="PANTHER" id="PTHR30523">
    <property type="entry name" value="PHOSPHOENOLPYRUVATE CARBOXYLASE"/>
    <property type="match status" value="1"/>
</dbReference>
<dbReference type="PANTHER" id="PTHR30523:SF6">
    <property type="entry name" value="PHOSPHOENOLPYRUVATE CARBOXYLASE"/>
    <property type="match status" value="1"/>
</dbReference>
<dbReference type="Pfam" id="PF00311">
    <property type="entry name" value="PEPcase"/>
    <property type="match status" value="1"/>
</dbReference>
<dbReference type="PRINTS" id="PR00150">
    <property type="entry name" value="PEPCARBXLASE"/>
</dbReference>
<dbReference type="SUPFAM" id="SSF51621">
    <property type="entry name" value="Phosphoenolpyruvate/pyruvate domain"/>
    <property type="match status" value="1"/>
</dbReference>
<dbReference type="PROSITE" id="PS00781">
    <property type="entry name" value="PEPCASE_1"/>
    <property type="match status" value="1"/>
</dbReference>
<dbReference type="PROSITE" id="PS00393">
    <property type="entry name" value="PEPCASE_2"/>
    <property type="match status" value="1"/>
</dbReference>
<sequence>MTEEYSNLRSNVSLLGQLLGKSIGGHLGEEFLDKIETIRQLSKSSRAGNQQDGVALIDMLTHLSDDELVPVARAFTHFLNLANIAEQFHGISRHCDSGVCAPEPIKDLISKFKNSNLSQQEMQQSVNELKMEMVLTAHPTEITRRTLIHKHIAINDCLSYLEISDISDKERDLLLNRLEQLITQAWHTNDIRQKRPTPVDEAKWGFATIEKSLWQAVPQFIRDLESELQSGLGLSLPLEASPITFTSWMGGDRDGNPFVTAKVTQEVLLSSRWVAVSLYLKDISQLTDELSMDNCDPALRSVVGDNAAEPYRAILRKLRSELKETLASLSATLQNQRSDEKDIITTSKQLKEPLLLCYHSLKNMGMNSIANGLILDILRRLNCFGINLLKLDIRQDAERHGNTLSELTRYLGIGDYNAWNEEDKQAFLLQELNNKRPLFPSQWNPSAEVQEVLDTCKVVAQTDPEALGIYIISMARQASDVLAVQLILKEVGCPFRIPVAPLFETLDDLNNSAAVMKRLFAIDWYRGYINGIQHVMIGYSDSAKDAGVIAANWAQYTSQEALVKLSAENDINLVLFHGRGGTIGRGGAPARQALLSQPPGSLKGGLRVTEQGEMIRFKFGLPKVAVQSLNQYAAAVLEANLLPPPAPKQEWRDVMQQFSDQSCQEYRHFVREEPDFVPYFRSVTPEVELGKLALGSRPSKRKPSGGIESLRAIPWIFAWSQNRLMLPAWLGAGTSLKTLLNEGKKPLLQEMYQHWPFFHTRLEMFEMVFLKADEELTKFYEERLVPKELWPLGQRLRDNLTLTRETVLETIPDHQLMQEQPWIKESISLRNPYVDPLNMLQAELLYRSRENGDEICPVVDQALMVTIAGIAAGLRNTG</sequence>
<gene>
    <name evidence="1" type="primary">ppc</name>
    <name type="ordered locus">Ping_0226</name>
</gene>
<keyword id="KW-0120">Carbon dioxide fixation</keyword>
<keyword id="KW-0456">Lyase</keyword>
<keyword id="KW-0460">Magnesium</keyword>
<keyword id="KW-1185">Reference proteome</keyword>
<name>CAPP_PSYIN</name>
<evidence type="ECO:0000255" key="1">
    <source>
        <dbReference type="HAMAP-Rule" id="MF_00595"/>
    </source>
</evidence>
<proteinExistence type="inferred from homology"/>
<feature type="chain" id="PRO_1000025582" description="Phosphoenolpyruvate carboxylase">
    <location>
        <begin position="1"/>
        <end position="878"/>
    </location>
</feature>
<feature type="active site" evidence="1">
    <location>
        <position position="138"/>
    </location>
</feature>
<feature type="active site" evidence="1">
    <location>
        <position position="544"/>
    </location>
</feature>
<organism>
    <name type="scientific">Psychromonas ingrahamii (strain DSM 17664 / CCUG 51855 / 37)</name>
    <dbReference type="NCBI Taxonomy" id="357804"/>
    <lineage>
        <taxon>Bacteria</taxon>
        <taxon>Pseudomonadati</taxon>
        <taxon>Pseudomonadota</taxon>
        <taxon>Gammaproteobacteria</taxon>
        <taxon>Alteromonadales</taxon>
        <taxon>Psychromonadaceae</taxon>
        <taxon>Psychromonas</taxon>
    </lineage>
</organism>
<reference key="1">
    <citation type="journal article" date="2008" name="BMC Genomics">
        <title>Genomics of an extreme psychrophile, Psychromonas ingrahamii.</title>
        <authorList>
            <person name="Riley M."/>
            <person name="Staley J.T."/>
            <person name="Danchin A."/>
            <person name="Wang T.Z."/>
            <person name="Brettin T.S."/>
            <person name="Hauser L.J."/>
            <person name="Land M.L."/>
            <person name="Thompson L.S."/>
        </authorList>
    </citation>
    <scope>NUCLEOTIDE SEQUENCE [LARGE SCALE GENOMIC DNA]</scope>
    <source>
        <strain>DSM 17664 / CCUG 51855 / 37</strain>
    </source>
</reference>
<protein>
    <recommendedName>
        <fullName evidence="1">Phosphoenolpyruvate carboxylase</fullName>
        <shortName evidence="1">PEPC</shortName>
        <shortName evidence="1">PEPCase</shortName>
        <ecNumber evidence="1">4.1.1.31</ecNumber>
    </recommendedName>
</protein>
<comment type="function">
    <text evidence="1">Forms oxaloacetate, a four-carbon dicarboxylic acid source for the tricarboxylic acid cycle.</text>
</comment>
<comment type="catalytic activity">
    <reaction evidence="1">
        <text>oxaloacetate + phosphate = phosphoenolpyruvate + hydrogencarbonate</text>
        <dbReference type="Rhea" id="RHEA:28370"/>
        <dbReference type="ChEBI" id="CHEBI:16452"/>
        <dbReference type="ChEBI" id="CHEBI:17544"/>
        <dbReference type="ChEBI" id="CHEBI:43474"/>
        <dbReference type="ChEBI" id="CHEBI:58702"/>
        <dbReference type="EC" id="4.1.1.31"/>
    </reaction>
</comment>
<comment type="cofactor">
    <cofactor evidence="1">
        <name>Mg(2+)</name>
        <dbReference type="ChEBI" id="CHEBI:18420"/>
    </cofactor>
</comment>
<comment type="similarity">
    <text evidence="1">Belongs to the PEPCase type 1 family.</text>
</comment>